<dbReference type="EC" id="2.4.2.9" evidence="1"/>
<dbReference type="EMBL" id="AM180355">
    <property type="protein sequence ID" value="CAJ69485.1"/>
    <property type="molecule type" value="Genomic_DNA"/>
</dbReference>
<dbReference type="RefSeq" id="WP_003431186.1">
    <property type="nucleotide sequence ID" value="NZ_JAUPES010000012.1"/>
</dbReference>
<dbReference type="RefSeq" id="YP_001089112.1">
    <property type="nucleotide sequence ID" value="NC_009089.1"/>
</dbReference>
<dbReference type="SMR" id="Q182T5"/>
<dbReference type="STRING" id="272563.CD630_25950"/>
<dbReference type="EnsemblBacteria" id="CAJ69485">
    <property type="protein sequence ID" value="CAJ69485"/>
    <property type="gene ID" value="CD630_25950"/>
</dbReference>
<dbReference type="GeneID" id="66354996"/>
<dbReference type="KEGG" id="cdf:CD630_25950"/>
<dbReference type="KEGG" id="pdc:CDIF630_02849"/>
<dbReference type="PATRIC" id="fig|272563.120.peg.2737"/>
<dbReference type="eggNOG" id="COG2065">
    <property type="taxonomic scope" value="Bacteria"/>
</dbReference>
<dbReference type="OrthoDB" id="9802227at2"/>
<dbReference type="PhylomeDB" id="Q182T5"/>
<dbReference type="BioCyc" id="PDIF272563:G12WB-2752-MONOMER"/>
<dbReference type="Proteomes" id="UP000001978">
    <property type="component" value="Chromosome"/>
</dbReference>
<dbReference type="GO" id="GO:0003723">
    <property type="term" value="F:RNA binding"/>
    <property type="evidence" value="ECO:0007669"/>
    <property type="project" value="UniProtKB-UniRule"/>
</dbReference>
<dbReference type="GO" id="GO:0004845">
    <property type="term" value="F:uracil phosphoribosyltransferase activity"/>
    <property type="evidence" value="ECO:0007669"/>
    <property type="project" value="UniProtKB-UniRule"/>
</dbReference>
<dbReference type="GO" id="GO:0006353">
    <property type="term" value="P:DNA-templated transcription termination"/>
    <property type="evidence" value="ECO:0007669"/>
    <property type="project" value="UniProtKB-UniRule"/>
</dbReference>
<dbReference type="CDD" id="cd06223">
    <property type="entry name" value="PRTases_typeI"/>
    <property type="match status" value="1"/>
</dbReference>
<dbReference type="FunFam" id="3.40.50.2020:FF:000020">
    <property type="entry name" value="Bifunctional protein PyrR"/>
    <property type="match status" value="1"/>
</dbReference>
<dbReference type="Gene3D" id="3.40.50.2020">
    <property type="match status" value="1"/>
</dbReference>
<dbReference type="HAMAP" id="MF_01219">
    <property type="entry name" value="PyrR"/>
    <property type="match status" value="1"/>
</dbReference>
<dbReference type="InterPro" id="IPR000836">
    <property type="entry name" value="PRibTrfase_dom"/>
</dbReference>
<dbReference type="InterPro" id="IPR029057">
    <property type="entry name" value="PRTase-like"/>
</dbReference>
<dbReference type="InterPro" id="IPR023050">
    <property type="entry name" value="PyrR"/>
</dbReference>
<dbReference type="InterPro" id="IPR050137">
    <property type="entry name" value="PyrR_bifunctional"/>
</dbReference>
<dbReference type="NCBIfam" id="NF003545">
    <property type="entry name" value="PRK05205.1-1"/>
    <property type="match status" value="1"/>
</dbReference>
<dbReference type="NCBIfam" id="NF003547">
    <property type="entry name" value="PRK05205.1-3"/>
    <property type="match status" value="1"/>
</dbReference>
<dbReference type="NCBIfam" id="NF003548">
    <property type="entry name" value="PRK05205.1-4"/>
    <property type="match status" value="1"/>
</dbReference>
<dbReference type="NCBIfam" id="NF003549">
    <property type="entry name" value="PRK05205.1-5"/>
    <property type="match status" value="1"/>
</dbReference>
<dbReference type="PANTHER" id="PTHR11608">
    <property type="entry name" value="BIFUNCTIONAL PROTEIN PYRR"/>
    <property type="match status" value="1"/>
</dbReference>
<dbReference type="PANTHER" id="PTHR11608:SF0">
    <property type="entry name" value="BIFUNCTIONAL PROTEIN PYRR"/>
    <property type="match status" value="1"/>
</dbReference>
<dbReference type="Pfam" id="PF00156">
    <property type="entry name" value="Pribosyltran"/>
    <property type="match status" value="1"/>
</dbReference>
<dbReference type="SUPFAM" id="SSF53271">
    <property type="entry name" value="PRTase-like"/>
    <property type="match status" value="1"/>
</dbReference>
<feature type="chain" id="PRO_1000053827" description="Bifunctional protein PyrR">
    <location>
        <begin position="1"/>
        <end position="177"/>
    </location>
</feature>
<feature type="short sequence motif" description="PRPP-binding" evidence="1">
    <location>
        <begin position="99"/>
        <end position="111"/>
    </location>
</feature>
<keyword id="KW-0328">Glycosyltransferase</keyword>
<keyword id="KW-1185">Reference proteome</keyword>
<keyword id="KW-0694">RNA-binding</keyword>
<keyword id="KW-0804">Transcription</keyword>
<keyword id="KW-0805">Transcription regulation</keyword>
<keyword id="KW-0806">Transcription termination</keyword>
<keyword id="KW-0808">Transferase</keyword>
<comment type="function">
    <text evidence="1">Regulates transcriptional attenuation of the pyrimidine nucleotide (pyr) operon by binding in a uridine-dependent manner to specific sites on pyr mRNA. This disrupts an antiterminator hairpin in the RNA and favors formation of a downstream transcription terminator, leading to a reduced expression of downstream genes.</text>
</comment>
<comment type="function">
    <text evidence="1">Also displays a weak uracil phosphoribosyltransferase activity which is not physiologically significant.</text>
</comment>
<comment type="catalytic activity">
    <reaction evidence="1">
        <text>UMP + diphosphate = 5-phospho-alpha-D-ribose 1-diphosphate + uracil</text>
        <dbReference type="Rhea" id="RHEA:13017"/>
        <dbReference type="ChEBI" id="CHEBI:17568"/>
        <dbReference type="ChEBI" id="CHEBI:33019"/>
        <dbReference type="ChEBI" id="CHEBI:57865"/>
        <dbReference type="ChEBI" id="CHEBI:58017"/>
        <dbReference type="EC" id="2.4.2.9"/>
    </reaction>
</comment>
<comment type="subunit">
    <text evidence="1">Homodimer and homohexamer; in equilibrium.</text>
</comment>
<comment type="similarity">
    <text evidence="1">Belongs to the purine/pyrimidine phosphoribosyltransferase family. PyrR subfamily.</text>
</comment>
<sequence>MVEKAQLMDEKAIARAITRISHEIIERNKGVENLVLVGIKTRGVPIANRISKKIEQIEGTKVDTGDIDITLYRDDLEKIHVEPVVKGTYLDFNVNDKTVVLVDDVLYTGRTVRASLDAIIDIGRPKSIQLAVLVDRGHRELPIRADYVGKNVPTSRHEIISVSLLEIDGEDSVTIKE</sequence>
<name>PYRR_CLOD6</name>
<proteinExistence type="inferred from homology"/>
<organism>
    <name type="scientific">Clostridioides difficile (strain 630)</name>
    <name type="common">Peptoclostridium difficile</name>
    <dbReference type="NCBI Taxonomy" id="272563"/>
    <lineage>
        <taxon>Bacteria</taxon>
        <taxon>Bacillati</taxon>
        <taxon>Bacillota</taxon>
        <taxon>Clostridia</taxon>
        <taxon>Peptostreptococcales</taxon>
        <taxon>Peptostreptococcaceae</taxon>
        <taxon>Clostridioides</taxon>
    </lineage>
</organism>
<accession>Q182T5</accession>
<protein>
    <recommendedName>
        <fullName evidence="1">Bifunctional protein PyrR</fullName>
    </recommendedName>
    <domain>
        <recommendedName>
            <fullName evidence="1">Pyrimidine operon regulatory protein</fullName>
        </recommendedName>
    </domain>
    <domain>
        <recommendedName>
            <fullName evidence="1">Uracil phosphoribosyltransferase</fullName>
            <shortName evidence="1">UPRTase</shortName>
            <ecNumber evidence="1">2.4.2.9</ecNumber>
        </recommendedName>
    </domain>
</protein>
<evidence type="ECO:0000255" key="1">
    <source>
        <dbReference type="HAMAP-Rule" id="MF_01219"/>
    </source>
</evidence>
<reference key="1">
    <citation type="journal article" date="2006" name="Nat. Genet.">
        <title>The multidrug-resistant human pathogen Clostridium difficile has a highly mobile, mosaic genome.</title>
        <authorList>
            <person name="Sebaihia M."/>
            <person name="Wren B.W."/>
            <person name="Mullany P."/>
            <person name="Fairweather N.F."/>
            <person name="Minton N."/>
            <person name="Stabler R."/>
            <person name="Thomson N.R."/>
            <person name="Roberts A.P."/>
            <person name="Cerdeno-Tarraga A.M."/>
            <person name="Wang H."/>
            <person name="Holden M.T.G."/>
            <person name="Wright A."/>
            <person name="Churcher C."/>
            <person name="Quail M.A."/>
            <person name="Baker S."/>
            <person name="Bason N."/>
            <person name="Brooks K."/>
            <person name="Chillingworth T."/>
            <person name="Cronin A."/>
            <person name="Davis P."/>
            <person name="Dowd L."/>
            <person name="Fraser A."/>
            <person name="Feltwell T."/>
            <person name="Hance Z."/>
            <person name="Holroyd S."/>
            <person name="Jagels K."/>
            <person name="Moule S."/>
            <person name="Mungall K."/>
            <person name="Price C."/>
            <person name="Rabbinowitsch E."/>
            <person name="Sharp S."/>
            <person name="Simmonds M."/>
            <person name="Stevens K."/>
            <person name="Unwin L."/>
            <person name="Whithead S."/>
            <person name="Dupuy B."/>
            <person name="Dougan G."/>
            <person name="Barrell B."/>
            <person name="Parkhill J."/>
        </authorList>
    </citation>
    <scope>NUCLEOTIDE SEQUENCE [LARGE SCALE GENOMIC DNA]</scope>
    <source>
        <strain>630</strain>
    </source>
</reference>
<gene>
    <name evidence="1" type="primary">pyrR</name>
    <name type="ordered locus">CD630_25950</name>
</gene>